<dbReference type="EC" id="7.1.1.-" evidence="1"/>
<dbReference type="EMBL" id="BX548174">
    <property type="protein sequence ID" value="CAE18619.1"/>
    <property type="molecule type" value="Genomic_DNA"/>
</dbReference>
<dbReference type="SMR" id="Q7V3C1"/>
<dbReference type="STRING" id="59919.PMM0160"/>
<dbReference type="KEGG" id="pmm:PMM0160"/>
<dbReference type="eggNOG" id="COG1005">
    <property type="taxonomic scope" value="Bacteria"/>
</dbReference>
<dbReference type="HOGENOM" id="CLU_015134_0_1_3"/>
<dbReference type="Proteomes" id="UP000001026">
    <property type="component" value="Chromosome"/>
</dbReference>
<dbReference type="GO" id="GO:0031676">
    <property type="term" value="C:plasma membrane-derived thylakoid membrane"/>
    <property type="evidence" value="ECO:0007669"/>
    <property type="project" value="UniProtKB-SubCell"/>
</dbReference>
<dbReference type="GO" id="GO:0003954">
    <property type="term" value="F:NADH dehydrogenase activity"/>
    <property type="evidence" value="ECO:0007669"/>
    <property type="project" value="TreeGrafter"/>
</dbReference>
<dbReference type="GO" id="GO:0016655">
    <property type="term" value="F:oxidoreductase activity, acting on NAD(P)H, quinone or similar compound as acceptor"/>
    <property type="evidence" value="ECO:0007669"/>
    <property type="project" value="UniProtKB-UniRule"/>
</dbReference>
<dbReference type="GO" id="GO:0048038">
    <property type="term" value="F:quinone binding"/>
    <property type="evidence" value="ECO:0007669"/>
    <property type="project" value="UniProtKB-KW"/>
</dbReference>
<dbReference type="GO" id="GO:0009060">
    <property type="term" value="P:aerobic respiration"/>
    <property type="evidence" value="ECO:0007669"/>
    <property type="project" value="TreeGrafter"/>
</dbReference>
<dbReference type="GO" id="GO:0019684">
    <property type="term" value="P:photosynthesis, light reaction"/>
    <property type="evidence" value="ECO:0007669"/>
    <property type="project" value="UniProtKB-UniRule"/>
</dbReference>
<dbReference type="HAMAP" id="MF_01350">
    <property type="entry name" value="NDH1_NuoH"/>
    <property type="match status" value="1"/>
</dbReference>
<dbReference type="InterPro" id="IPR001694">
    <property type="entry name" value="NADH_UbQ_OxRdtase_su1/FPO"/>
</dbReference>
<dbReference type="InterPro" id="IPR018086">
    <property type="entry name" value="NADH_UbQ_OxRdtase_su1_CS"/>
</dbReference>
<dbReference type="NCBIfam" id="NF004741">
    <property type="entry name" value="PRK06076.1-2"/>
    <property type="match status" value="1"/>
</dbReference>
<dbReference type="NCBIfam" id="NF004744">
    <property type="entry name" value="PRK06076.1-5"/>
    <property type="match status" value="1"/>
</dbReference>
<dbReference type="PANTHER" id="PTHR11432">
    <property type="entry name" value="NADH DEHYDROGENASE SUBUNIT 1"/>
    <property type="match status" value="1"/>
</dbReference>
<dbReference type="PANTHER" id="PTHR11432:SF3">
    <property type="entry name" value="NADH-UBIQUINONE OXIDOREDUCTASE CHAIN 1"/>
    <property type="match status" value="1"/>
</dbReference>
<dbReference type="Pfam" id="PF00146">
    <property type="entry name" value="NADHdh"/>
    <property type="match status" value="1"/>
</dbReference>
<dbReference type="PROSITE" id="PS00667">
    <property type="entry name" value="COMPLEX1_ND1_1"/>
    <property type="match status" value="1"/>
</dbReference>
<dbReference type="PROSITE" id="PS00668">
    <property type="entry name" value="COMPLEX1_ND1_2"/>
    <property type="match status" value="1"/>
</dbReference>
<proteinExistence type="inferred from homology"/>
<gene>
    <name evidence="1" type="primary">ndhA</name>
    <name type="ordered locus">PMM0160</name>
</gene>
<accession>Q7V3C1</accession>
<reference key="1">
    <citation type="journal article" date="2003" name="Nature">
        <title>Genome divergence in two Prochlorococcus ecotypes reflects oceanic niche differentiation.</title>
        <authorList>
            <person name="Rocap G."/>
            <person name="Larimer F.W."/>
            <person name="Lamerdin J.E."/>
            <person name="Malfatti S."/>
            <person name="Chain P."/>
            <person name="Ahlgren N.A."/>
            <person name="Arellano A."/>
            <person name="Coleman M."/>
            <person name="Hauser L."/>
            <person name="Hess W.R."/>
            <person name="Johnson Z.I."/>
            <person name="Land M.L."/>
            <person name="Lindell D."/>
            <person name="Post A.F."/>
            <person name="Regala W."/>
            <person name="Shah M."/>
            <person name="Shaw S.L."/>
            <person name="Steglich C."/>
            <person name="Sullivan M.B."/>
            <person name="Ting C.S."/>
            <person name="Tolonen A."/>
            <person name="Webb E.A."/>
            <person name="Zinser E.R."/>
            <person name="Chisholm S.W."/>
        </authorList>
    </citation>
    <scope>NUCLEOTIDE SEQUENCE [LARGE SCALE GENOMIC DNA]</scope>
    <source>
        <strain>CCMP1986 / NIES-2087 / MED4</strain>
    </source>
</reference>
<organism>
    <name type="scientific">Prochlorococcus marinus subsp. pastoris (strain CCMP1986 / NIES-2087 / MED4)</name>
    <dbReference type="NCBI Taxonomy" id="59919"/>
    <lineage>
        <taxon>Bacteria</taxon>
        <taxon>Bacillati</taxon>
        <taxon>Cyanobacteriota</taxon>
        <taxon>Cyanophyceae</taxon>
        <taxon>Synechococcales</taxon>
        <taxon>Prochlorococcaceae</taxon>
        <taxon>Prochlorococcus</taxon>
    </lineage>
</organism>
<name>NU1C_PROMP</name>
<keyword id="KW-0472">Membrane</keyword>
<keyword id="KW-0520">NAD</keyword>
<keyword id="KW-0521">NADP</keyword>
<keyword id="KW-0618">Plastoquinone</keyword>
<keyword id="KW-0874">Quinone</keyword>
<keyword id="KW-0793">Thylakoid</keyword>
<keyword id="KW-1278">Translocase</keyword>
<keyword id="KW-0812">Transmembrane</keyword>
<keyword id="KW-1133">Transmembrane helix</keyword>
<comment type="function">
    <text evidence="1">NDH-1 shuttles electrons from an unknown electron donor, via FMN and iron-sulfur (Fe-S) centers, to quinones in the respiratory and/or the photosynthetic chain. The immediate electron acceptor for the enzyme in this species is believed to be plastoquinone. Couples the redox reaction to proton translocation, and thus conserves the redox energy in a proton gradient.</text>
</comment>
<comment type="catalytic activity">
    <reaction evidence="1">
        <text>a plastoquinone + NADH + (n+1) H(+)(in) = a plastoquinol + NAD(+) + n H(+)(out)</text>
        <dbReference type="Rhea" id="RHEA:42608"/>
        <dbReference type="Rhea" id="RHEA-COMP:9561"/>
        <dbReference type="Rhea" id="RHEA-COMP:9562"/>
        <dbReference type="ChEBI" id="CHEBI:15378"/>
        <dbReference type="ChEBI" id="CHEBI:17757"/>
        <dbReference type="ChEBI" id="CHEBI:57540"/>
        <dbReference type="ChEBI" id="CHEBI:57945"/>
        <dbReference type="ChEBI" id="CHEBI:62192"/>
    </reaction>
</comment>
<comment type="catalytic activity">
    <reaction evidence="1">
        <text>a plastoquinone + NADPH + (n+1) H(+)(in) = a plastoquinol + NADP(+) + n H(+)(out)</text>
        <dbReference type="Rhea" id="RHEA:42612"/>
        <dbReference type="Rhea" id="RHEA-COMP:9561"/>
        <dbReference type="Rhea" id="RHEA-COMP:9562"/>
        <dbReference type="ChEBI" id="CHEBI:15378"/>
        <dbReference type="ChEBI" id="CHEBI:17757"/>
        <dbReference type="ChEBI" id="CHEBI:57783"/>
        <dbReference type="ChEBI" id="CHEBI:58349"/>
        <dbReference type="ChEBI" id="CHEBI:62192"/>
    </reaction>
</comment>
<comment type="subunit">
    <text evidence="1">NDH-1 is composed of at least 11 different subunits.</text>
</comment>
<comment type="subcellular location">
    <subcellularLocation>
        <location evidence="1">Cellular thylakoid membrane</location>
        <topology evidence="1">Multi-pass membrane protein</topology>
    </subcellularLocation>
</comment>
<comment type="similarity">
    <text evidence="1">Belongs to the complex I subunit 1 family.</text>
</comment>
<evidence type="ECO:0000255" key="1">
    <source>
        <dbReference type="HAMAP-Rule" id="MF_01350"/>
    </source>
</evidence>
<protein>
    <recommendedName>
        <fullName evidence="1">NAD(P)H-quinone oxidoreductase subunit 1</fullName>
        <ecNumber evidence="1">7.1.1.-</ecNumber>
    </recommendedName>
    <alternativeName>
        <fullName evidence="1">NAD(P)H dehydrogenase I subunit 1</fullName>
    </alternativeName>
    <alternativeName>
        <fullName evidence="1">NDH-1 subunit 1</fullName>
    </alternativeName>
    <alternativeName>
        <fullName evidence="1">NDH-A</fullName>
    </alternativeName>
</protein>
<feature type="chain" id="PRO_0000240040" description="NAD(P)H-quinone oxidoreductase subunit 1">
    <location>
        <begin position="1"/>
        <end position="372"/>
    </location>
</feature>
<feature type="transmembrane region" description="Helical" evidence="1">
    <location>
        <begin position="27"/>
        <end position="47"/>
    </location>
</feature>
<feature type="transmembrane region" description="Helical" evidence="1">
    <location>
        <begin position="97"/>
        <end position="117"/>
    </location>
</feature>
<feature type="transmembrane region" description="Helical" evidence="1">
    <location>
        <begin position="128"/>
        <end position="148"/>
    </location>
</feature>
<feature type="transmembrane region" description="Helical" evidence="1">
    <location>
        <begin position="176"/>
        <end position="196"/>
    </location>
</feature>
<feature type="transmembrane region" description="Helical" evidence="1">
    <location>
        <begin position="204"/>
        <end position="224"/>
    </location>
</feature>
<feature type="transmembrane region" description="Helical" evidence="1">
    <location>
        <begin position="266"/>
        <end position="286"/>
    </location>
</feature>
<feature type="transmembrane region" description="Helical" evidence="1">
    <location>
        <begin position="308"/>
        <end position="328"/>
    </location>
</feature>
<feature type="transmembrane region" description="Helical" evidence="1">
    <location>
        <begin position="347"/>
        <end position="367"/>
    </location>
</feature>
<sequence>MNSGLDLEYSFNEILKGFGLSSELAHIIWLPLPMLLVLVSAVVGVLVTVWLERKISAAAQQRIGPEYAGALGVLQPIADGLKLLVKEDIIPAKADSILFTAGPILVLVPVILSWLIVPFGQNLLISNVGIGIFLWIALSSIQPIGLLMSGYASNNKYSLLGGLRAAAQSISYEIPLALSVLAIVLMTNSLSTIDIVNQQSGAGILSWNIWRQPVGFIIFWICALAECERLPFDLPEAEEELVAGYQTEYAGMKFALFYLGSYINLILSALLVSILYLGGWGFPIPVEIIAKALNLPIDAPVIQVFTASIGIIMTVLKAYLLVFVAILLRWTTPRVRIDQLLDLGWKFLLPISLANLLVTAGLKLAFPQFFGG</sequence>